<reference key="1">
    <citation type="journal article" date="2008" name="PLoS ONE">
        <title>A recalibrated molecular clock and independent origins for the cholera pandemic clones.</title>
        <authorList>
            <person name="Feng L."/>
            <person name="Reeves P.R."/>
            <person name="Lan R."/>
            <person name="Ren Y."/>
            <person name="Gao C."/>
            <person name="Zhou Z."/>
            <person name="Ren Y."/>
            <person name="Cheng J."/>
            <person name="Wang W."/>
            <person name="Wang J."/>
            <person name="Qian W."/>
            <person name="Li D."/>
            <person name="Wang L."/>
        </authorList>
    </citation>
    <scope>NUCLEOTIDE SEQUENCE [LARGE SCALE GENOMIC DNA]</scope>
    <source>
        <strain>M66-2</strain>
    </source>
</reference>
<protein>
    <recommendedName>
        <fullName evidence="1">Large ribosomal subunit protein uL13</fullName>
    </recommendedName>
    <alternativeName>
        <fullName evidence="2">50S ribosomal protein L13</fullName>
    </alternativeName>
</protein>
<proteinExistence type="inferred from homology"/>
<dbReference type="EMBL" id="CP001233">
    <property type="protein sequence ID" value="ACP04853.1"/>
    <property type="molecule type" value="Genomic_DNA"/>
</dbReference>
<dbReference type="RefSeq" id="WP_000847599.1">
    <property type="nucleotide sequence ID" value="NC_012578.1"/>
</dbReference>
<dbReference type="SMR" id="C3LS60"/>
<dbReference type="GeneID" id="94014650"/>
<dbReference type="KEGG" id="vcm:VCM66_0528"/>
<dbReference type="HOGENOM" id="CLU_082184_2_2_6"/>
<dbReference type="Proteomes" id="UP000001217">
    <property type="component" value="Chromosome I"/>
</dbReference>
<dbReference type="GO" id="GO:0022625">
    <property type="term" value="C:cytosolic large ribosomal subunit"/>
    <property type="evidence" value="ECO:0007669"/>
    <property type="project" value="TreeGrafter"/>
</dbReference>
<dbReference type="GO" id="GO:0003729">
    <property type="term" value="F:mRNA binding"/>
    <property type="evidence" value="ECO:0007669"/>
    <property type="project" value="TreeGrafter"/>
</dbReference>
<dbReference type="GO" id="GO:0003735">
    <property type="term" value="F:structural constituent of ribosome"/>
    <property type="evidence" value="ECO:0007669"/>
    <property type="project" value="InterPro"/>
</dbReference>
<dbReference type="GO" id="GO:0017148">
    <property type="term" value="P:negative regulation of translation"/>
    <property type="evidence" value="ECO:0007669"/>
    <property type="project" value="TreeGrafter"/>
</dbReference>
<dbReference type="GO" id="GO:0006412">
    <property type="term" value="P:translation"/>
    <property type="evidence" value="ECO:0007669"/>
    <property type="project" value="UniProtKB-UniRule"/>
</dbReference>
<dbReference type="CDD" id="cd00392">
    <property type="entry name" value="Ribosomal_L13"/>
    <property type="match status" value="1"/>
</dbReference>
<dbReference type="FunFam" id="3.90.1180.10:FF:000001">
    <property type="entry name" value="50S ribosomal protein L13"/>
    <property type="match status" value="1"/>
</dbReference>
<dbReference type="Gene3D" id="3.90.1180.10">
    <property type="entry name" value="Ribosomal protein L13"/>
    <property type="match status" value="1"/>
</dbReference>
<dbReference type="HAMAP" id="MF_01366">
    <property type="entry name" value="Ribosomal_uL13"/>
    <property type="match status" value="1"/>
</dbReference>
<dbReference type="InterPro" id="IPR005822">
    <property type="entry name" value="Ribosomal_uL13"/>
</dbReference>
<dbReference type="InterPro" id="IPR005823">
    <property type="entry name" value="Ribosomal_uL13_bac-type"/>
</dbReference>
<dbReference type="InterPro" id="IPR023563">
    <property type="entry name" value="Ribosomal_uL13_CS"/>
</dbReference>
<dbReference type="InterPro" id="IPR036899">
    <property type="entry name" value="Ribosomal_uL13_sf"/>
</dbReference>
<dbReference type="NCBIfam" id="TIGR01066">
    <property type="entry name" value="rplM_bact"/>
    <property type="match status" value="1"/>
</dbReference>
<dbReference type="PANTHER" id="PTHR11545:SF2">
    <property type="entry name" value="LARGE RIBOSOMAL SUBUNIT PROTEIN UL13M"/>
    <property type="match status" value="1"/>
</dbReference>
<dbReference type="PANTHER" id="PTHR11545">
    <property type="entry name" value="RIBOSOMAL PROTEIN L13"/>
    <property type="match status" value="1"/>
</dbReference>
<dbReference type="Pfam" id="PF00572">
    <property type="entry name" value="Ribosomal_L13"/>
    <property type="match status" value="1"/>
</dbReference>
<dbReference type="PIRSF" id="PIRSF002181">
    <property type="entry name" value="Ribosomal_L13"/>
    <property type="match status" value="1"/>
</dbReference>
<dbReference type="SUPFAM" id="SSF52161">
    <property type="entry name" value="Ribosomal protein L13"/>
    <property type="match status" value="1"/>
</dbReference>
<dbReference type="PROSITE" id="PS00783">
    <property type="entry name" value="RIBOSOMAL_L13"/>
    <property type="match status" value="1"/>
</dbReference>
<gene>
    <name evidence="1" type="primary">rplM</name>
    <name type="ordered locus">VCM66_0528</name>
</gene>
<keyword id="KW-0687">Ribonucleoprotein</keyword>
<keyword id="KW-0689">Ribosomal protein</keyword>
<evidence type="ECO:0000255" key="1">
    <source>
        <dbReference type="HAMAP-Rule" id="MF_01366"/>
    </source>
</evidence>
<evidence type="ECO:0000305" key="2"/>
<organism>
    <name type="scientific">Vibrio cholerae serotype O1 (strain M66-2)</name>
    <dbReference type="NCBI Taxonomy" id="579112"/>
    <lineage>
        <taxon>Bacteria</taxon>
        <taxon>Pseudomonadati</taxon>
        <taxon>Pseudomonadota</taxon>
        <taxon>Gammaproteobacteria</taxon>
        <taxon>Vibrionales</taxon>
        <taxon>Vibrionaceae</taxon>
        <taxon>Vibrio</taxon>
    </lineage>
</organism>
<sequence length="142" mass="15990">MKTFVAKPETVKRDWYVVDAEGKTLGRLASEIASRLRGKHKAEYTPHVDTGDYIIVVNAEKVTVTGNKAKNKMYHRHSEFPGGLKSFSFEKLIERKPEMVLELAVKGMLPKGPLGRAMYRKLKVYAGAEHNHAAQQPKVLDI</sequence>
<name>RL13_VIBCM</name>
<comment type="function">
    <text evidence="1">This protein is one of the early assembly proteins of the 50S ribosomal subunit, although it is not seen to bind rRNA by itself. It is important during the early stages of 50S assembly.</text>
</comment>
<comment type="subunit">
    <text evidence="1">Part of the 50S ribosomal subunit.</text>
</comment>
<comment type="similarity">
    <text evidence="1">Belongs to the universal ribosomal protein uL13 family.</text>
</comment>
<accession>C3LS60</accession>
<feature type="chain" id="PRO_1000166886" description="Large ribosomal subunit protein uL13">
    <location>
        <begin position="1"/>
        <end position="142"/>
    </location>
</feature>